<keyword id="KW-1185">Reference proteome</keyword>
<reference key="1">
    <citation type="journal article" date="1996" name="Science">
        <title>Complete genome sequence of the methanogenic archaeon, Methanococcus jannaschii.</title>
        <authorList>
            <person name="Bult C.J."/>
            <person name="White O."/>
            <person name="Olsen G.J."/>
            <person name="Zhou L."/>
            <person name="Fleischmann R.D."/>
            <person name="Sutton G.G."/>
            <person name="Blake J.A."/>
            <person name="FitzGerald L.M."/>
            <person name="Clayton R.A."/>
            <person name="Gocayne J.D."/>
            <person name="Kerlavage A.R."/>
            <person name="Dougherty B.A."/>
            <person name="Tomb J.-F."/>
            <person name="Adams M.D."/>
            <person name="Reich C.I."/>
            <person name="Overbeek R."/>
            <person name="Kirkness E.F."/>
            <person name="Weinstock K.G."/>
            <person name="Merrick J.M."/>
            <person name="Glodek A."/>
            <person name="Scott J.L."/>
            <person name="Geoghagen N.S.M."/>
            <person name="Weidman J.F."/>
            <person name="Fuhrmann J.L."/>
            <person name="Nguyen D."/>
            <person name="Utterback T.R."/>
            <person name="Kelley J.M."/>
            <person name="Peterson J.D."/>
            <person name="Sadow P.W."/>
            <person name="Hanna M.C."/>
            <person name="Cotton M.D."/>
            <person name="Roberts K.M."/>
            <person name="Hurst M.A."/>
            <person name="Kaine B.P."/>
            <person name="Borodovsky M."/>
            <person name="Klenk H.-P."/>
            <person name="Fraser C.M."/>
            <person name="Smith H.O."/>
            <person name="Woese C.R."/>
            <person name="Venter J.C."/>
        </authorList>
    </citation>
    <scope>NUCLEOTIDE SEQUENCE [LARGE SCALE GENOMIC DNA]</scope>
    <source>
        <strain>ATCC 43067 / DSM 2661 / JAL-1 / JCM 10045 / NBRC 100440</strain>
    </source>
</reference>
<sequence>MKSPHKVIYCYLIILYKLSSCHIYYKYIPFRLTVLVNYFLLLNVGEIMWKKLESLTSKIYEKARKRKGEHRIALLIDGPNMLRKEFNIDLDKIREVLSEFGDIVIGRVYLNQYASDKLIEAVINQGFEPKISAGDVDVEMAVDATELVFNPNIDTIAYVTRDADFLPAIRKAKERGKKVIVIGAEPGFSTALQNIADYVIKIGEEFQLDREKLEKKKKNKFLKVEEKQKDKEETENREEP</sequence>
<organism>
    <name type="scientific">Methanocaldococcus jannaschii (strain ATCC 43067 / DSM 2661 / JAL-1 / JCM 10045 / NBRC 100440)</name>
    <name type="common">Methanococcus jannaschii</name>
    <dbReference type="NCBI Taxonomy" id="243232"/>
    <lineage>
        <taxon>Archaea</taxon>
        <taxon>Methanobacteriati</taxon>
        <taxon>Methanobacteriota</taxon>
        <taxon>Methanomada group</taxon>
        <taxon>Methanococci</taxon>
        <taxon>Methanococcales</taxon>
        <taxon>Methanocaldococcaceae</taxon>
        <taxon>Methanocaldococcus</taxon>
    </lineage>
</organism>
<proteinExistence type="predicted"/>
<name>Y482_METJA</name>
<accession>Q57905</accession>
<protein>
    <recommendedName>
        <fullName>Uncharacterized protein MJ0482</fullName>
    </recommendedName>
</protein>
<dbReference type="EMBL" id="L77117">
    <property type="protein sequence ID" value="AAB98473.1"/>
    <property type="molecule type" value="Genomic_DNA"/>
</dbReference>
<dbReference type="PIR" id="A64360">
    <property type="entry name" value="A64360"/>
</dbReference>
<dbReference type="SMR" id="Q57905"/>
<dbReference type="STRING" id="243232.MJ_0482"/>
<dbReference type="PaxDb" id="243232-MJ_0482"/>
<dbReference type="DNASU" id="1451343"/>
<dbReference type="EnsemblBacteria" id="AAB98473">
    <property type="protein sequence ID" value="AAB98473"/>
    <property type="gene ID" value="MJ_0482"/>
</dbReference>
<dbReference type="KEGG" id="mja:MJ_0482"/>
<dbReference type="eggNOG" id="arCOG02408">
    <property type="taxonomic scope" value="Archaea"/>
</dbReference>
<dbReference type="HOGENOM" id="CLU_100862_0_0_2"/>
<dbReference type="InParanoid" id="Q57905"/>
<dbReference type="PhylomeDB" id="Q57905"/>
<dbReference type="Proteomes" id="UP000000805">
    <property type="component" value="Chromosome"/>
</dbReference>
<dbReference type="GO" id="GO:0004540">
    <property type="term" value="F:RNA nuclease activity"/>
    <property type="evidence" value="ECO:0007669"/>
    <property type="project" value="InterPro"/>
</dbReference>
<dbReference type="CDD" id="cd18726">
    <property type="entry name" value="PIN_LabA-like"/>
    <property type="match status" value="1"/>
</dbReference>
<dbReference type="Gene3D" id="3.40.50.1010">
    <property type="entry name" value="5'-nuclease"/>
    <property type="match status" value="1"/>
</dbReference>
<dbReference type="InterPro" id="IPR002790">
    <property type="entry name" value="CHP00288"/>
</dbReference>
<dbReference type="InterPro" id="IPR021139">
    <property type="entry name" value="NYN"/>
</dbReference>
<dbReference type="NCBIfam" id="TIGR00288">
    <property type="entry name" value="TIGR00288 family NYN domain-containing protein"/>
    <property type="match status" value="1"/>
</dbReference>
<dbReference type="PANTHER" id="PTHR35811:SF1">
    <property type="entry name" value="HTH OST-TYPE DOMAIN-CONTAINING PROTEIN"/>
    <property type="match status" value="1"/>
</dbReference>
<dbReference type="PANTHER" id="PTHR35811">
    <property type="entry name" value="SLR1870 PROTEIN"/>
    <property type="match status" value="1"/>
</dbReference>
<dbReference type="Pfam" id="PF01936">
    <property type="entry name" value="NYN"/>
    <property type="match status" value="1"/>
</dbReference>
<feature type="chain" id="PRO_0000106890" description="Uncharacterized protein MJ0482">
    <location>
        <begin position="1"/>
        <end position="240"/>
    </location>
</feature>
<gene>
    <name type="ordered locus">MJ0482</name>
</gene>